<name>RPPH_SHISS</name>
<proteinExistence type="inferred from homology"/>
<organism>
    <name type="scientific">Shigella sonnei (strain Ss046)</name>
    <dbReference type="NCBI Taxonomy" id="300269"/>
    <lineage>
        <taxon>Bacteria</taxon>
        <taxon>Pseudomonadati</taxon>
        <taxon>Pseudomonadota</taxon>
        <taxon>Gammaproteobacteria</taxon>
        <taxon>Enterobacterales</taxon>
        <taxon>Enterobacteriaceae</taxon>
        <taxon>Shigella</taxon>
    </lineage>
</organism>
<comment type="function">
    <text evidence="1">Accelerates the degradation of transcripts by removing pyrophosphate from the 5'-end of triphosphorylated RNA, leading to a more labile monophosphorylated state that can stimulate subsequent ribonuclease cleavage.</text>
</comment>
<comment type="cofactor">
    <cofactor evidence="1">
        <name>a divalent metal cation</name>
        <dbReference type="ChEBI" id="CHEBI:60240"/>
    </cofactor>
</comment>
<comment type="similarity">
    <text evidence="1">Belongs to the Nudix hydrolase family. RppH subfamily.</text>
</comment>
<dbReference type="EC" id="3.6.1.-" evidence="1"/>
<dbReference type="EMBL" id="CP000038">
    <property type="protein sequence ID" value="AAZ89582.1"/>
    <property type="molecule type" value="Genomic_DNA"/>
</dbReference>
<dbReference type="RefSeq" id="WP_000564490.1">
    <property type="nucleotide sequence ID" value="NC_007384.1"/>
</dbReference>
<dbReference type="SMR" id="Q3YY30"/>
<dbReference type="GeneID" id="93779168"/>
<dbReference type="KEGG" id="ssn:SSON_2987"/>
<dbReference type="HOGENOM" id="CLU_087195_3_2_6"/>
<dbReference type="Proteomes" id="UP000002529">
    <property type="component" value="Chromosome"/>
</dbReference>
<dbReference type="GO" id="GO:0005737">
    <property type="term" value="C:cytoplasm"/>
    <property type="evidence" value="ECO:0007669"/>
    <property type="project" value="TreeGrafter"/>
</dbReference>
<dbReference type="GO" id="GO:0034353">
    <property type="term" value="F:mRNA 5'-diphosphatase activity"/>
    <property type="evidence" value="ECO:0007669"/>
    <property type="project" value="TreeGrafter"/>
</dbReference>
<dbReference type="GO" id="GO:0006402">
    <property type="term" value="P:mRNA catabolic process"/>
    <property type="evidence" value="ECO:0007669"/>
    <property type="project" value="TreeGrafter"/>
</dbReference>
<dbReference type="CDD" id="cd03671">
    <property type="entry name" value="NUDIX_Ap4A_hydrolase_plant_like"/>
    <property type="match status" value="1"/>
</dbReference>
<dbReference type="FunFam" id="3.90.79.10:FF:000001">
    <property type="entry name" value="RNA pyrophosphohydrolase"/>
    <property type="match status" value="1"/>
</dbReference>
<dbReference type="Gene3D" id="3.90.79.10">
    <property type="entry name" value="Nucleoside Triphosphate Pyrophosphohydrolase"/>
    <property type="match status" value="1"/>
</dbReference>
<dbReference type="HAMAP" id="MF_00298">
    <property type="entry name" value="Nudix_RppH"/>
    <property type="match status" value="1"/>
</dbReference>
<dbReference type="InterPro" id="IPR020476">
    <property type="entry name" value="Nudix_hydrolase"/>
</dbReference>
<dbReference type="InterPro" id="IPR015797">
    <property type="entry name" value="NUDIX_hydrolase-like_dom_sf"/>
</dbReference>
<dbReference type="InterPro" id="IPR020084">
    <property type="entry name" value="NUDIX_hydrolase_CS"/>
</dbReference>
<dbReference type="InterPro" id="IPR000086">
    <property type="entry name" value="NUDIX_hydrolase_dom"/>
</dbReference>
<dbReference type="InterPro" id="IPR022927">
    <property type="entry name" value="RppH"/>
</dbReference>
<dbReference type="NCBIfam" id="NF001934">
    <property type="entry name" value="PRK00714.1-1"/>
    <property type="match status" value="1"/>
</dbReference>
<dbReference type="NCBIfam" id="NF001937">
    <property type="entry name" value="PRK00714.1-4"/>
    <property type="match status" value="1"/>
</dbReference>
<dbReference type="NCBIfam" id="NF001938">
    <property type="entry name" value="PRK00714.1-5"/>
    <property type="match status" value="1"/>
</dbReference>
<dbReference type="PANTHER" id="PTHR23114">
    <property type="entry name" value="M7GPPPN-MRNA HYDROLASE"/>
    <property type="match status" value="1"/>
</dbReference>
<dbReference type="PANTHER" id="PTHR23114:SF17">
    <property type="entry name" value="M7GPPPN-MRNA HYDROLASE"/>
    <property type="match status" value="1"/>
</dbReference>
<dbReference type="Pfam" id="PF00293">
    <property type="entry name" value="NUDIX"/>
    <property type="match status" value="1"/>
</dbReference>
<dbReference type="PRINTS" id="PR00502">
    <property type="entry name" value="NUDIXFAMILY"/>
</dbReference>
<dbReference type="SUPFAM" id="SSF55811">
    <property type="entry name" value="Nudix"/>
    <property type="match status" value="1"/>
</dbReference>
<dbReference type="PROSITE" id="PS51462">
    <property type="entry name" value="NUDIX"/>
    <property type="match status" value="1"/>
</dbReference>
<dbReference type="PROSITE" id="PS00893">
    <property type="entry name" value="NUDIX_BOX"/>
    <property type="match status" value="1"/>
</dbReference>
<sequence>MIDDDGYRPNVGIVICNRQGQVMWARRFGQHSWQFPQGGINPGESAEQAMYRELFEEVGLSRKDVRILASTRNWLRYKLPKRLVRWDTKPVCIGQKQKWFLLQLVSGDAEINMQTSSTPEFDGWRWVSYWYPVRQVVSFKRDVYRRVMKEFASVVMSLQENTPKPQNTSAYRRKRG</sequence>
<feature type="chain" id="PRO_0000231938" description="RNA pyrophosphohydrolase">
    <location>
        <begin position="1"/>
        <end position="176"/>
    </location>
</feature>
<feature type="domain" description="Nudix hydrolase" evidence="1">
    <location>
        <begin position="6"/>
        <end position="149"/>
    </location>
</feature>
<feature type="short sequence motif" description="Nudix box">
    <location>
        <begin position="38"/>
        <end position="59"/>
    </location>
</feature>
<gene>
    <name evidence="1" type="primary">rppH</name>
    <name evidence="1" type="synonym">nudH</name>
    <name type="ordered locus">SSON_2987</name>
</gene>
<reference key="1">
    <citation type="journal article" date="2005" name="Nucleic Acids Res.">
        <title>Genome dynamics and diversity of Shigella species, the etiologic agents of bacillary dysentery.</title>
        <authorList>
            <person name="Yang F."/>
            <person name="Yang J."/>
            <person name="Zhang X."/>
            <person name="Chen L."/>
            <person name="Jiang Y."/>
            <person name="Yan Y."/>
            <person name="Tang X."/>
            <person name="Wang J."/>
            <person name="Xiong Z."/>
            <person name="Dong J."/>
            <person name="Xue Y."/>
            <person name="Zhu Y."/>
            <person name="Xu X."/>
            <person name="Sun L."/>
            <person name="Chen S."/>
            <person name="Nie H."/>
            <person name="Peng J."/>
            <person name="Xu J."/>
            <person name="Wang Y."/>
            <person name="Yuan Z."/>
            <person name="Wen Y."/>
            <person name="Yao Z."/>
            <person name="Shen Y."/>
            <person name="Qiang B."/>
            <person name="Hou Y."/>
            <person name="Yu J."/>
            <person name="Jin Q."/>
        </authorList>
    </citation>
    <scope>NUCLEOTIDE SEQUENCE [LARGE SCALE GENOMIC DNA]</scope>
    <source>
        <strain>Ss046</strain>
    </source>
</reference>
<accession>Q3YY30</accession>
<evidence type="ECO:0000255" key="1">
    <source>
        <dbReference type="HAMAP-Rule" id="MF_00298"/>
    </source>
</evidence>
<keyword id="KW-0378">Hydrolase</keyword>
<keyword id="KW-1185">Reference proteome</keyword>
<protein>
    <recommendedName>
        <fullName evidence="1">RNA pyrophosphohydrolase</fullName>
        <ecNumber evidence="1">3.6.1.-</ecNumber>
    </recommendedName>
    <alternativeName>
        <fullName evidence="1">(Di)nucleoside polyphosphate hydrolase</fullName>
    </alternativeName>
</protein>